<accession>Q32H22</accession>
<feature type="signal peptide" evidence="1">
    <location>
        <begin position="1"/>
        <end position="15"/>
    </location>
</feature>
<feature type="chain" id="PRO_0000312915" description="Endo-type membrane-bound lytic murein transglycosylase A">
    <location>
        <begin position="16"/>
        <end position="203"/>
    </location>
</feature>
<feature type="lipid moiety-binding region" description="N-palmitoyl cysteine" evidence="1">
    <location>
        <position position="16"/>
    </location>
</feature>
<feature type="lipid moiety-binding region" description="S-diacylglycerol cysteine" evidence="1">
    <location>
        <position position="16"/>
    </location>
</feature>
<sequence length="203" mass="22241">MKLRWFAFLIVLLAGCSSKHDYTNPPWNAKVPVQRAMQWMPISQKAGAAWGVDPQLITAIIAIESGGNPNAVSKSNAIGLMQLKASTSGRDVYRRMGWSGEPTTSELKNPERNISMGAAYLNILETGPLAGIEDPKVLQYALVVSYANGAGVLLRTFSSDRKKAISKINDLDADEFLDHVARNHPAPQAPRYIYKLEQALDAM</sequence>
<protein>
    <recommendedName>
        <fullName evidence="1">Endo-type membrane-bound lytic murein transglycosylase A</fullName>
        <ecNumber evidence="1">4.2.2.n2</ecNumber>
    </recommendedName>
    <alternativeName>
        <fullName evidence="1">Peptidoglycan lytic endotransglycosylase</fullName>
    </alternativeName>
</protein>
<organism>
    <name type="scientific">Shigella dysenteriae serotype 1 (strain Sd197)</name>
    <dbReference type="NCBI Taxonomy" id="300267"/>
    <lineage>
        <taxon>Bacteria</taxon>
        <taxon>Pseudomonadati</taxon>
        <taxon>Pseudomonadota</taxon>
        <taxon>Gammaproteobacteria</taxon>
        <taxon>Enterobacterales</taxon>
        <taxon>Enterobacteriaceae</taxon>
        <taxon>Shigella</taxon>
    </lineage>
</organism>
<reference key="1">
    <citation type="journal article" date="2005" name="Nucleic Acids Res.">
        <title>Genome dynamics and diversity of Shigella species, the etiologic agents of bacillary dysentery.</title>
        <authorList>
            <person name="Yang F."/>
            <person name="Yang J."/>
            <person name="Zhang X."/>
            <person name="Chen L."/>
            <person name="Jiang Y."/>
            <person name="Yan Y."/>
            <person name="Tang X."/>
            <person name="Wang J."/>
            <person name="Xiong Z."/>
            <person name="Dong J."/>
            <person name="Xue Y."/>
            <person name="Zhu Y."/>
            <person name="Xu X."/>
            <person name="Sun L."/>
            <person name="Chen S."/>
            <person name="Nie H."/>
            <person name="Peng J."/>
            <person name="Xu J."/>
            <person name="Wang Y."/>
            <person name="Yuan Z."/>
            <person name="Wen Y."/>
            <person name="Yao Z."/>
            <person name="Shen Y."/>
            <person name="Qiang B."/>
            <person name="Hou Y."/>
            <person name="Yu J."/>
            <person name="Jin Q."/>
        </authorList>
    </citation>
    <scope>NUCLEOTIDE SEQUENCE [LARGE SCALE GENOMIC DNA]</scope>
    <source>
        <strain>Sd197</strain>
    </source>
</reference>
<dbReference type="EC" id="4.2.2.n2" evidence="1"/>
<dbReference type="EMBL" id="CP000034">
    <property type="protein sequence ID" value="ABB61382.1"/>
    <property type="status" value="ALT_INIT"/>
    <property type="molecule type" value="Genomic_DNA"/>
</dbReference>
<dbReference type="RefSeq" id="WP_001310262.1">
    <property type="nucleotide sequence ID" value="NC_007606.1"/>
</dbReference>
<dbReference type="RefSeq" id="YP_402874.1">
    <property type="nucleotide sequence ID" value="NC_007606.1"/>
</dbReference>
<dbReference type="SMR" id="Q32H22"/>
<dbReference type="STRING" id="300267.SDY_1231"/>
<dbReference type="CAZy" id="GH23">
    <property type="family name" value="Glycoside Hydrolase Family 23"/>
</dbReference>
<dbReference type="EnsemblBacteria" id="ABB61382">
    <property type="protein sequence ID" value="ABB61382"/>
    <property type="gene ID" value="SDY_1231"/>
</dbReference>
<dbReference type="KEGG" id="sdy:SDY_1231"/>
<dbReference type="PATRIC" id="fig|300267.13.peg.1462"/>
<dbReference type="HOGENOM" id="CLU_103257_0_0_6"/>
<dbReference type="Proteomes" id="UP000002716">
    <property type="component" value="Chromosome"/>
</dbReference>
<dbReference type="GO" id="GO:0009279">
    <property type="term" value="C:cell outer membrane"/>
    <property type="evidence" value="ECO:0007669"/>
    <property type="project" value="UniProtKB-SubCell"/>
</dbReference>
<dbReference type="GO" id="GO:0008932">
    <property type="term" value="F:lytic endotransglycosylase activity"/>
    <property type="evidence" value="ECO:0007669"/>
    <property type="project" value="InterPro"/>
</dbReference>
<dbReference type="GO" id="GO:0016998">
    <property type="term" value="P:cell wall macromolecule catabolic process"/>
    <property type="evidence" value="ECO:0007669"/>
    <property type="project" value="UniProtKB-UniRule"/>
</dbReference>
<dbReference type="GO" id="GO:0071555">
    <property type="term" value="P:cell wall organization"/>
    <property type="evidence" value="ECO:0007669"/>
    <property type="project" value="UniProtKB-KW"/>
</dbReference>
<dbReference type="GO" id="GO:0000270">
    <property type="term" value="P:peptidoglycan metabolic process"/>
    <property type="evidence" value="ECO:0007669"/>
    <property type="project" value="InterPro"/>
</dbReference>
<dbReference type="CDD" id="cd16893">
    <property type="entry name" value="LT_MltC_MltE"/>
    <property type="match status" value="1"/>
</dbReference>
<dbReference type="FunFam" id="1.10.530.10:FF:000007">
    <property type="entry name" value="Endo-type membrane-bound lytic murein transglycosylase A"/>
    <property type="match status" value="1"/>
</dbReference>
<dbReference type="Gene3D" id="1.10.530.10">
    <property type="match status" value="1"/>
</dbReference>
<dbReference type="HAMAP" id="MF_01381">
    <property type="entry name" value="EmtA"/>
    <property type="match status" value="1"/>
</dbReference>
<dbReference type="InterPro" id="IPR023946">
    <property type="entry name" value="EmtA"/>
</dbReference>
<dbReference type="InterPro" id="IPR023346">
    <property type="entry name" value="Lysozyme-like_dom_sf"/>
</dbReference>
<dbReference type="InterPro" id="IPR000189">
    <property type="entry name" value="Transglyc_AS"/>
</dbReference>
<dbReference type="InterPro" id="IPR008258">
    <property type="entry name" value="Transglycosylase_SLT_dom_1"/>
</dbReference>
<dbReference type="NCBIfam" id="NF012014">
    <property type="entry name" value="PRK15470.1"/>
    <property type="match status" value="1"/>
</dbReference>
<dbReference type="PANTHER" id="PTHR37423:SF4">
    <property type="entry name" value="ENDO-TYPE MEMBRANE-BOUND LYTIC MUREIN TRANSGLYCOSYLASE A"/>
    <property type="match status" value="1"/>
</dbReference>
<dbReference type="PANTHER" id="PTHR37423">
    <property type="entry name" value="SOLUBLE LYTIC MUREIN TRANSGLYCOSYLASE-RELATED"/>
    <property type="match status" value="1"/>
</dbReference>
<dbReference type="Pfam" id="PF01464">
    <property type="entry name" value="SLT"/>
    <property type="match status" value="1"/>
</dbReference>
<dbReference type="SUPFAM" id="SSF53955">
    <property type="entry name" value="Lysozyme-like"/>
    <property type="match status" value="1"/>
</dbReference>
<dbReference type="PROSITE" id="PS51257">
    <property type="entry name" value="PROKAR_LIPOPROTEIN"/>
    <property type="match status" value="1"/>
</dbReference>
<dbReference type="PROSITE" id="PS00922">
    <property type="entry name" value="TRANSGLYCOSYLASE"/>
    <property type="match status" value="1"/>
</dbReference>
<comment type="function">
    <text evidence="1">Murein-degrading enzyme. May play a role in recycling of muropeptides during cell elongation and/or cell division. Preferentially cleaves at a distance of more than two disaccharide units from the ends of the glycan chain.</text>
</comment>
<comment type="catalytic activity">
    <reaction evidence="1">
        <text>Endolytic cleavage of the (1-&gt;4)-beta-glycosidic linkage between N-acetylmuramic acid (MurNAc) and N-acetylglucosamine (GlcNAc) residues in peptidoglycan with concomitant formation of a 1,6-anhydrobond in the MurNAc residue.</text>
        <dbReference type="EC" id="4.2.2.n2"/>
    </reaction>
</comment>
<comment type="subcellular location">
    <subcellularLocation>
        <location evidence="1">Cell outer membrane</location>
        <topology evidence="1">Lipid-anchor</topology>
    </subcellularLocation>
</comment>
<comment type="similarity">
    <text evidence="1">Belongs to the transglycosylase Slt family.</text>
</comment>
<comment type="sequence caution" evidence="2">
    <conflict type="erroneous initiation">
        <sequence resource="EMBL-CDS" id="ABB61382"/>
    </conflict>
</comment>
<name>EMTA_SHIDS</name>
<proteinExistence type="inferred from homology"/>
<keyword id="KW-0998">Cell outer membrane</keyword>
<keyword id="KW-0961">Cell wall biogenesis/degradation</keyword>
<keyword id="KW-0449">Lipoprotein</keyword>
<keyword id="KW-0456">Lyase</keyword>
<keyword id="KW-0472">Membrane</keyword>
<keyword id="KW-0564">Palmitate</keyword>
<keyword id="KW-1185">Reference proteome</keyword>
<keyword id="KW-0732">Signal</keyword>
<evidence type="ECO:0000255" key="1">
    <source>
        <dbReference type="HAMAP-Rule" id="MF_01381"/>
    </source>
</evidence>
<evidence type="ECO:0000305" key="2"/>
<gene>
    <name evidence="1" type="primary">emtA</name>
    <name type="synonym">mltE</name>
    <name type="ordered locus">SDY_1231</name>
</gene>